<dbReference type="EMBL" id="X74152">
    <property type="protein sequence ID" value="CAA52264.1"/>
    <property type="molecule type" value="Genomic_DNA"/>
</dbReference>
<dbReference type="EMBL" id="Z28014">
    <property type="protein sequence ID" value="CAA81849.1"/>
    <property type="molecule type" value="Genomic_DNA"/>
</dbReference>
<dbReference type="EMBL" id="BK006944">
    <property type="protein sequence ID" value="DAA09142.1"/>
    <property type="molecule type" value="Genomic_DNA"/>
</dbReference>
<dbReference type="PIR" id="S37827">
    <property type="entry name" value="S37827"/>
</dbReference>
<dbReference type="RefSeq" id="NP_012911.3">
    <property type="nucleotide sequence ID" value="NM_001179580.3"/>
</dbReference>
<dbReference type="BioGRID" id="34118">
    <property type="interactions" value="160"/>
</dbReference>
<dbReference type="ComplexPortal" id="CPX-1421">
    <property type="entry name" value="NOP8 60s ribosome pre-assembly complex"/>
</dbReference>
<dbReference type="DIP" id="DIP-2701N"/>
<dbReference type="FunCoup" id="P34241">
    <property type="interactions" value="403"/>
</dbReference>
<dbReference type="IntAct" id="P34241">
    <property type="interactions" value="28"/>
</dbReference>
<dbReference type="MINT" id="P34241"/>
<dbReference type="STRING" id="4932.YKL014C"/>
<dbReference type="iPTMnet" id="P34241"/>
<dbReference type="PaxDb" id="4932-YKL014C"/>
<dbReference type="PeptideAtlas" id="P34241"/>
<dbReference type="EnsemblFungi" id="YKL014C_mRNA">
    <property type="protein sequence ID" value="YKL014C"/>
    <property type="gene ID" value="YKL014C"/>
</dbReference>
<dbReference type="GeneID" id="853855"/>
<dbReference type="KEGG" id="sce:YKL014C"/>
<dbReference type="AGR" id="SGD:S000001497"/>
<dbReference type="SGD" id="S000001497">
    <property type="gene designation" value="URB1"/>
</dbReference>
<dbReference type="VEuPathDB" id="FungiDB:YKL014C"/>
<dbReference type="eggNOG" id="KOG1791">
    <property type="taxonomic scope" value="Eukaryota"/>
</dbReference>
<dbReference type="GeneTree" id="ENSGT00390000014210"/>
<dbReference type="HOGENOM" id="CLU_003174_0_0_1"/>
<dbReference type="InParanoid" id="P34241"/>
<dbReference type="OMA" id="MTSYWFG"/>
<dbReference type="OrthoDB" id="72892at2759"/>
<dbReference type="BioCyc" id="YEAST:G3O-31823-MONOMER"/>
<dbReference type="BioGRID-ORCS" id="853855">
    <property type="hits" value="4 hits in 10 CRISPR screens"/>
</dbReference>
<dbReference type="PRO" id="PR:P34241"/>
<dbReference type="Proteomes" id="UP000002311">
    <property type="component" value="Chromosome XI"/>
</dbReference>
<dbReference type="RNAct" id="P34241">
    <property type="molecule type" value="protein"/>
</dbReference>
<dbReference type="GO" id="GO:0005730">
    <property type="term" value="C:nucleolus"/>
    <property type="evidence" value="ECO:0000314"/>
    <property type="project" value="SGD"/>
</dbReference>
<dbReference type="GO" id="GO:0005634">
    <property type="term" value="C:nucleus"/>
    <property type="evidence" value="ECO:0000303"/>
    <property type="project" value="ComplexPortal"/>
</dbReference>
<dbReference type="GO" id="GO:0003729">
    <property type="term" value="F:mRNA binding"/>
    <property type="evidence" value="ECO:0007005"/>
    <property type="project" value="SGD"/>
</dbReference>
<dbReference type="GO" id="GO:0000466">
    <property type="term" value="P:maturation of 5.8S rRNA from tricistronic rRNA transcript (SSU-rRNA, 5.8S rRNA, LSU-rRNA)"/>
    <property type="evidence" value="ECO:0000315"/>
    <property type="project" value="SGD"/>
</dbReference>
<dbReference type="GO" id="GO:0000463">
    <property type="term" value="P:maturation of LSU-rRNA from tricistronic rRNA transcript (SSU-rRNA, 5.8S rRNA, LSU-rRNA)"/>
    <property type="evidence" value="ECO:0000315"/>
    <property type="project" value="SGD"/>
</dbReference>
<dbReference type="GO" id="GO:0042273">
    <property type="term" value="P:ribosomal large subunit biogenesis"/>
    <property type="evidence" value="ECO:0000303"/>
    <property type="project" value="ComplexPortal"/>
</dbReference>
<dbReference type="InterPro" id="IPR032436">
    <property type="entry name" value="NopRA1_C"/>
</dbReference>
<dbReference type="InterPro" id="IPR021714">
    <property type="entry name" value="Npa1_N"/>
</dbReference>
<dbReference type="InterPro" id="IPR039844">
    <property type="entry name" value="URB1"/>
</dbReference>
<dbReference type="PANTHER" id="PTHR13500:SF0">
    <property type="entry name" value="NUCLEOLAR PRE-RIBOSOMAL-ASSOCIATED PROTEIN 1"/>
    <property type="match status" value="1"/>
</dbReference>
<dbReference type="PANTHER" id="PTHR13500">
    <property type="entry name" value="NUCLEOLAR PRERIBOSOMAL-ASSOCIATED PROTEIN 1"/>
    <property type="match status" value="1"/>
</dbReference>
<dbReference type="Pfam" id="PF16201">
    <property type="entry name" value="NopRA1"/>
    <property type="match status" value="1"/>
</dbReference>
<dbReference type="Pfam" id="PF11707">
    <property type="entry name" value="Npa1"/>
    <property type="match status" value="1"/>
</dbReference>
<accession>P34241</accession>
<accession>D6VXS2</accession>
<accession>P34242</accession>
<gene>
    <name type="primary">URB1</name>
    <name type="synonym">NPA1</name>
    <name type="ordered locus">YKL014C</name>
</gene>
<evidence type="ECO:0000256" key="1">
    <source>
        <dbReference type="SAM" id="MobiDB-lite"/>
    </source>
</evidence>
<evidence type="ECO:0000269" key="2">
    <source>
    </source>
</evidence>
<evidence type="ECO:0000269" key="3">
    <source>
    </source>
</evidence>
<evidence type="ECO:0000269" key="4">
    <source>
    </source>
</evidence>
<evidence type="ECO:0000269" key="5">
    <source>
    </source>
</evidence>
<evidence type="ECO:0000269" key="6">
    <source>
    </source>
</evidence>
<evidence type="ECO:0000269" key="7">
    <source>
    </source>
</evidence>
<protein>
    <recommendedName>
        <fullName>Nucleolar pre-ribosomal-associated protein 1</fullName>
    </recommendedName>
    <alternativeName>
        <fullName>Unhealthy ribosome biogenesis protein 1</fullName>
    </alternativeName>
</protein>
<feature type="chain" id="PRO_0000203190" description="Nucleolar pre-ribosomal-associated protein 1">
    <location>
        <begin position="1"/>
        <end position="1764"/>
    </location>
</feature>
<feature type="region of interest" description="Disordered" evidence="1">
    <location>
        <begin position="1"/>
        <end position="23"/>
    </location>
</feature>
<feature type="compositionally biased region" description="Basic and acidic residues" evidence="1">
    <location>
        <begin position="9"/>
        <end position="23"/>
    </location>
</feature>
<keyword id="KW-0539">Nucleus</keyword>
<keyword id="KW-1185">Reference proteome</keyword>
<keyword id="KW-0690">Ribosome biogenesis</keyword>
<keyword id="KW-0698">rRNA processing</keyword>
<proteinExistence type="evidence at protein level"/>
<name>URB1_YEAST</name>
<comment type="function">
    <text evidence="4 5 6">Required for 60S ribosomal subunit formation and pre-rRNA processing. Required for normal accumulation of 25S and 5.8S rRNAs.</text>
</comment>
<comment type="subunit">
    <text evidence="5 6 7">Associates with pre-60S ribosomal particles. Predominantly associated with the 27SA2 pre-rRNA. Can associate with a subset of box H/ACA and box C/D small nucleolar RNPs (snoRNPs) required for peptidyl transferase center modification and with small RNAs snR37 and snR42. Interacts with URB2. Together with DBP6, NOP8, URB2 and RSA3, forms an RNA-independent complex, which is required during early maturation of nascent 60S ribosomal subunits.</text>
</comment>
<comment type="interaction">
    <interactant intactId="EBI-26595">
        <id>P34241</id>
    </interactant>
    <interactant intactId="EBI-5625">
        <id>P53734</id>
        <label>DBP6</label>
    </interactant>
    <organismsDiffer>false</organismsDiffer>
    <experiments>5</experiments>
</comment>
<comment type="interaction">
    <interactant intactId="EBI-26595">
        <id>P34241</id>
    </interactant>
    <interactant intactId="EBI-28098">
        <id>Q04660</id>
        <label>ERB1</label>
    </interactant>
    <organismsDiffer>false</organismsDiffer>
    <experiments>3</experiments>
</comment>
<comment type="interaction">
    <interactant intactId="EBI-26595">
        <id>P34241</id>
    </interactant>
    <interactant intactId="EBI-10937">
        <id>P10962</id>
        <label>MAK16</label>
    </interactant>
    <organismsDiffer>false</organismsDiffer>
    <experiments>3</experiments>
</comment>
<comment type="interaction">
    <interactant intactId="EBI-26595">
        <id>P34241</id>
    </interactant>
    <interactant intactId="EBI-12135">
        <id>Q08287</id>
        <label>NOP8</label>
    </interactant>
    <organismsDiffer>false</organismsDiffer>
    <experiments>4</experiments>
</comment>
<comment type="interaction">
    <interactant intactId="EBI-26595">
        <id>P34241</id>
    </interactant>
    <interactant intactId="EBI-33602">
        <id>Q05942</id>
        <label>RSA3</label>
    </interactant>
    <organismsDiffer>false</organismsDiffer>
    <experiments>5</experiments>
</comment>
<comment type="interaction">
    <interactant intactId="EBI-26595">
        <id>P34241</id>
    </interactant>
    <interactant intactId="EBI-25492">
        <id>P47108</id>
        <label>URB2</label>
    </interactant>
    <organismsDiffer>false</organismsDiffer>
    <experiments>6</experiments>
</comment>
<comment type="subcellular location">
    <subcellularLocation>
        <location evidence="2 4 5">Nucleus</location>
        <location evidence="2 4 5">Nucleolus</location>
    </subcellularLocation>
    <text>Accumulates in the immediate vicinity of the dense fibrillar component of the nucleolus.</text>
</comment>
<comment type="miscellaneous">
    <text evidence="3">Present with 5890 molecules/cell in log phase SD medium.</text>
</comment>
<reference key="1">
    <citation type="journal article" date="1993" name="Yeast">
        <title>Sequencing and analysis of 51.6 kilobases on the left arm of chromosome XI from Saccharomyces cerevisiae reveals 23 open reading frames including the FAS1 gene.</title>
        <authorList>
            <person name="Wiemann S."/>
            <person name="Voss H."/>
            <person name="Schwager C."/>
            <person name="Rupp T."/>
            <person name="Stegemann J."/>
            <person name="Zimmermann J."/>
            <person name="Grothues D."/>
            <person name="Sensen C."/>
            <person name="Erfle H."/>
            <person name="Hewitt N."/>
            <person name="Banrevi A."/>
            <person name="Ansorge W."/>
        </authorList>
    </citation>
    <scope>NUCLEOTIDE SEQUENCE [GENOMIC DNA]</scope>
</reference>
<reference key="2">
    <citation type="journal article" date="1994" name="Nature">
        <title>Complete DNA sequence of yeast chromosome XI.</title>
        <authorList>
            <person name="Dujon B."/>
            <person name="Alexandraki D."/>
            <person name="Andre B."/>
            <person name="Ansorge W."/>
            <person name="Baladron V."/>
            <person name="Ballesta J.P.G."/>
            <person name="Banrevi A."/>
            <person name="Bolle P.-A."/>
            <person name="Bolotin-Fukuhara M."/>
            <person name="Bossier P."/>
            <person name="Bou G."/>
            <person name="Boyer J."/>
            <person name="Buitrago M.J."/>
            <person name="Cheret G."/>
            <person name="Colleaux L."/>
            <person name="Daignan-Fornier B."/>
            <person name="del Rey F."/>
            <person name="Dion C."/>
            <person name="Domdey H."/>
            <person name="Duesterhoeft A."/>
            <person name="Duesterhus S."/>
            <person name="Entian K.-D."/>
            <person name="Erfle H."/>
            <person name="Esteban P.F."/>
            <person name="Feldmann H."/>
            <person name="Fernandes L."/>
            <person name="Fobo G.M."/>
            <person name="Fritz C."/>
            <person name="Fukuhara H."/>
            <person name="Gabel C."/>
            <person name="Gaillon L."/>
            <person name="Garcia-Cantalejo J.M."/>
            <person name="Garcia-Ramirez J.J."/>
            <person name="Gent M.E."/>
            <person name="Ghazvini M."/>
            <person name="Goffeau A."/>
            <person name="Gonzalez A."/>
            <person name="Grothues D."/>
            <person name="Guerreiro P."/>
            <person name="Hegemann J.H."/>
            <person name="Hewitt N."/>
            <person name="Hilger F."/>
            <person name="Hollenberg C.P."/>
            <person name="Horaitis O."/>
            <person name="Indge K.J."/>
            <person name="Jacquier A."/>
            <person name="James C.M."/>
            <person name="Jauniaux J.-C."/>
            <person name="Jimenez A."/>
            <person name="Keuchel H."/>
            <person name="Kirchrath L."/>
            <person name="Kleine K."/>
            <person name="Koetter P."/>
            <person name="Legrain P."/>
            <person name="Liebl S."/>
            <person name="Louis E.J."/>
            <person name="Maia e Silva A."/>
            <person name="Marck C."/>
            <person name="Monnier A.-L."/>
            <person name="Moestl D."/>
            <person name="Mueller S."/>
            <person name="Obermaier B."/>
            <person name="Oliver S.G."/>
            <person name="Pallier C."/>
            <person name="Pascolo S."/>
            <person name="Pfeiffer F."/>
            <person name="Philippsen P."/>
            <person name="Planta R.J."/>
            <person name="Pohl F.M."/>
            <person name="Pohl T.M."/>
            <person name="Poehlmann R."/>
            <person name="Portetelle D."/>
            <person name="Purnelle B."/>
            <person name="Puzos V."/>
            <person name="Ramezani Rad M."/>
            <person name="Rasmussen S.W."/>
            <person name="Remacha M.A."/>
            <person name="Revuelta J.L."/>
            <person name="Richard G.-F."/>
            <person name="Rieger M."/>
            <person name="Rodrigues-Pousada C."/>
            <person name="Rose M."/>
            <person name="Rupp T."/>
            <person name="Santos M.A."/>
            <person name="Schwager C."/>
            <person name="Sensen C."/>
            <person name="Skala J."/>
            <person name="Soares H."/>
            <person name="Sor F."/>
            <person name="Stegemann J."/>
            <person name="Tettelin H."/>
            <person name="Thierry A."/>
            <person name="Tzermia M."/>
            <person name="Urrestarazu L.A."/>
            <person name="van Dyck L."/>
            <person name="van Vliet-Reedijk J.C."/>
            <person name="Valens M."/>
            <person name="Vandenbol M."/>
            <person name="Vilela C."/>
            <person name="Vissers S."/>
            <person name="von Wettstein D."/>
            <person name="Voss H."/>
            <person name="Wiemann S."/>
            <person name="Xu G."/>
            <person name="Zimmermann J."/>
            <person name="Haasemann M."/>
            <person name="Becker I."/>
            <person name="Mewes H.-W."/>
        </authorList>
    </citation>
    <scope>NUCLEOTIDE SEQUENCE [LARGE SCALE GENOMIC DNA]</scope>
    <source>
        <strain>ATCC 204508 / S288c</strain>
    </source>
</reference>
<reference key="3">
    <citation type="journal article" date="2014" name="G3 (Bethesda)">
        <title>The reference genome sequence of Saccharomyces cerevisiae: Then and now.</title>
        <authorList>
            <person name="Engel S.R."/>
            <person name="Dietrich F.S."/>
            <person name="Fisk D.G."/>
            <person name="Binkley G."/>
            <person name="Balakrishnan R."/>
            <person name="Costanzo M.C."/>
            <person name="Dwight S.S."/>
            <person name="Hitz B.C."/>
            <person name="Karra K."/>
            <person name="Nash R.S."/>
            <person name="Weng S."/>
            <person name="Wong E.D."/>
            <person name="Lloyd P."/>
            <person name="Skrzypek M.S."/>
            <person name="Miyasato S.R."/>
            <person name="Simison M."/>
            <person name="Cherry J.M."/>
        </authorList>
    </citation>
    <scope>GENOME REANNOTATION</scope>
    <source>
        <strain>ATCC 204508 / S288c</strain>
    </source>
</reference>
<reference key="4">
    <citation type="journal article" date="2003" name="Nature">
        <title>Global analysis of protein localization in budding yeast.</title>
        <authorList>
            <person name="Huh W.-K."/>
            <person name="Falvo J.V."/>
            <person name="Gerke L.C."/>
            <person name="Carroll A.S."/>
            <person name="Howson R.W."/>
            <person name="Weissman J.S."/>
            <person name="O'Shea E.K."/>
        </authorList>
    </citation>
    <scope>SUBCELLULAR LOCATION [LARGE SCALE ANALYSIS]</scope>
</reference>
<reference key="5">
    <citation type="journal article" date="2003" name="Nature">
        <title>Global analysis of protein expression in yeast.</title>
        <authorList>
            <person name="Ghaemmaghami S."/>
            <person name="Huh W.-K."/>
            <person name="Bower K."/>
            <person name="Howson R.W."/>
            <person name="Belle A."/>
            <person name="Dephoure N."/>
            <person name="O'Shea E.K."/>
            <person name="Weissman J.S."/>
        </authorList>
    </citation>
    <scope>LEVEL OF PROTEIN EXPRESSION [LARGE SCALE ANALYSIS]</scope>
</reference>
<reference key="6">
    <citation type="journal article" date="2004" name="Cell">
        <title>Exploration of essential gene functions via titratable promoter alleles.</title>
        <authorList>
            <person name="Mnaimneh S."/>
            <person name="Davierwala A.P."/>
            <person name="Haynes J."/>
            <person name="Moffat J."/>
            <person name="Peng W.-T."/>
            <person name="Zhang W."/>
            <person name="Yang X."/>
            <person name="Pootoolal J."/>
            <person name="Chua G."/>
            <person name="Lopez A."/>
            <person name="Trochesset M."/>
            <person name="Morse D."/>
            <person name="Krogan N.J."/>
            <person name="Hiley S.L."/>
            <person name="Li Z."/>
            <person name="Morris Q."/>
            <person name="Grigull J."/>
            <person name="Mitsakakis N."/>
            <person name="Roberts C.J."/>
            <person name="Greenblatt J.F."/>
            <person name="Boone C."/>
            <person name="Kaiser C.A."/>
            <person name="Andrews B.J."/>
            <person name="Hughes T.R."/>
        </authorList>
    </citation>
    <scope>FUNCTION</scope>
    <scope>INTERACTION WITH URB2</scope>
</reference>
<reference key="7">
    <citation type="journal article" date="2004" name="Mol. Cell. Biol.">
        <title>Npa1p, a component of very early pre-60S ribosomal particles, associates with a subset of small nucleolar RNPs required for peptidyl transferase center modification.</title>
        <authorList>
            <person name="Dez C."/>
            <person name="Froment C."/>
            <person name="Noaillac-Depeyre J."/>
            <person name="Monsarrat B."/>
            <person name="Caizergues-Ferrer M."/>
            <person name="Henry Y."/>
        </authorList>
    </citation>
    <scope>FUNCTION</scope>
    <scope>SUBUNIT</scope>
    <scope>INTERACTION WITH URB2</scope>
    <scope>SUBCELLULAR LOCATION</scope>
</reference>
<reference key="8">
    <citation type="journal article" date="2004" name="RNA">
        <title>Npa1p is an essential trans-acting factor required for an early step in the assembly of 60S ribosomal subunits in Saccharomyces cerevisiae.</title>
        <authorList>
            <person name="Rosado I.V."/>
            <person name="de la Cruz J."/>
        </authorList>
    </citation>
    <scope>FUNCTION</scope>
    <scope>ASSOCIATION WITH PRE-RIBOSOMAL PARTICLES</scope>
    <scope>SUBCELLULAR LOCATION</scope>
</reference>
<reference key="9">
    <citation type="journal article" date="2007" name="Mol. Cell. Biol.">
        <title>Characterization of Saccharomyces cerevisiae Npa2p (Urb2p) reveals a Low-molecular-mass complex containing Dbp6p, Npa1p (Urb1p), Nop8p, and Rsa3p involved in early steps of 60S ribosomal subunit biogenesis.</title>
        <authorList>
            <person name="Rosado I.V."/>
            <person name="Dez C."/>
            <person name="Lebaron S."/>
            <person name="Caizergues-Ferrer M."/>
            <person name="Henry Y."/>
            <person name="de la Cruz J."/>
        </authorList>
    </citation>
    <scope>IDENTIFICATION IN A COMPLEX WITH DBP6; NOP8; URB2 AND RSA3</scope>
</reference>
<organism>
    <name type="scientific">Saccharomyces cerevisiae (strain ATCC 204508 / S288c)</name>
    <name type="common">Baker's yeast</name>
    <dbReference type="NCBI Taxonomy" id="559292"/>
    <lineage>
        <taxon>Eukaryota</taxon>
        <taxon>Fungi</taxon>
        <taxon>Dikarya</taxon>
        <taxon>Ascomycota</taxon>
        <taxon>Saccharomycotina</taxon>
        <taxon>Saccharomycetes</taxon>
        <taxon>Saccharomycetales</taxon>
        <taxon>Saccharomycetaceae</taxon>
        <taxon>Saccharomyces</taxon>
    </lineage>
</organism>
<sequence>MSNHSEAYGSRDQRREKYTQGKEFEDGTLETLESIISAVEDETLSKDYQPLIVFFQRGFGAQLVQTWSYYAQVNNHGKFSKTTSLLTKTLRVLSSDTSTVTIGSGLIRLILTDYTKVLYRGLNNMRAQLTNPILRLLKQIVNFNNGQHIEELVSYFDFSLPILPRLLVPSKSELANGNSSADSSKHDSLRFTFIKFWLTLISNASPFVRKELLTENFKIMSNLFKFMNKADSDKLSEHILSVFINDILKEKSFKRTTKTKILNELAASKIHHFYYSSNKNLVKKANEFFLTFGASRDFSVAFPDNCVWFKNSVADGASHGAPITVNQVEFQIHNKLLFNTLRLFKPWEDTLQLGTLIKILENVPELVAPYSIFLTTNGNYDPKMTSYWFGITLLINKIINLKIPQFMEKVDSNIPPATSLVIENILPSLLTKSSLVKSLQFETPIIRQLACQSIVLALKKLEKVSTFYDQKGWRNEKTILLNEFHTRIPDLPIFVSTLSNSLASNKDNRILPLSISIIFNYYSKMFPNLFSINLPSSNIYTDIMQKSKISGIEFAILDNYLQFQEFNSTQTRWWNPSSGGNSLFTLLLKLASSKNASNVITTRISNLLDELTRTNVIFNISLISPVMALVNSLQGLSLQVSEIDNMEQVWKWFDETISRVVKTPYKYVDMAKEYNYISPFIMCLSEQWKYVDKSGNPEFLIKWLILFLRNMIFIGEDHIGIDKLVKNVFPEVSDHDVNIYLKLDSFEENIKKTNSSNSLISSMKSSSFFQYISALPSKNLMNISRLPVNKLDAAGILFRVQLLVEDDSVVYDNWFEATACELTGKIASYMVTDTEFPIIKVLERYINFALPKLAIEKRNALLMKKSRFMCNLIGAVCFETGHQLVEFREIIQKVVFSGENVEEYANYNELYQKEDVNAFLTSVSEYLSTSALTSLLMCSTKLESTRNILQKLFNEGKTIKISLVKNILNKAANEDPASIKEVNISLAKFFEENKVCVDASSDPMGKLSLSETTSLINSFVSSDLNYLVLKAFYRWEHFSFPSFIPSIWRIKDSPLLSIVTTAALFKHMQDKDFSAFAHETISKYGNEIAKSTYTTSKSEIFDEILNMITTYIDFYDETKRNEILKCVLSQSDHKYHAATVRYIAAHNNFTYPGVETWLHKTLLYLTKYLSERKVISNSFFELLRAMAELLKLEEVPNKLNVKIINSQLEAILGSEWIKQIKVLEYVIVLIFCVSKKSIQSQRMVQLLLSNDSYSSIMIKDNDEDSSYRKFLSTMILFSLFSIDPVVNSTPIVQEKLLTFYSGTISSNDKLILKILETIESHTATSWTNMIFSWEFIKDEEEEILEAIGDTRLITKEREGLILTLQKNMIKKSIDRYVLERPQVPELYTDSNTNNYDATTRCDLVKKYYDDTERSGVDMYDPLFLLLLIIHNKELVKMVKDDEGNVTYRYEFENFLDCKIFQFIICSLSDCHTVANISYEHLSNLASSLEKKTAQMNLEKQITSKDNERKESDSDLIKYNSIYQVLIKRILYQRQQNQDPINPLIWFSISRIVDLLGSPTAPLHEKAYRWVLSNSTIRSWDIPMVSDVMMSYNKRQQDDNKKEIDMEIYYGELSWVLTTICKGIKTDEDYKMLEKKGVFEWLLNLINMPYLKERLRELIYFIFYKVQRVADDGGLNLISRNGIVSFFEVLNNNIKSRLPQDDILNNIGTLRNENRGTLNTTLRLAQEQNGIEKLLLGYNELVKSQKRLILWTEGDSDNVVKRLRK</sequence>